<evidence type="ECO:0000255" key="1">
    <source>
        <dbReference type="HAMAP-Rule" id="MF_00163"/>
    </source>
</evidence>
<gene>
    <name evidence="1" type="primary">def</name>
    <name type="ordered locus">Lreu_0630</name>
</gene>
<organism>
    <name type="scientific">Limosilactobacillus reuteri (strain DSM 20016)</name>
    <name type="common">Lactobacillus reuteri</name>
    <dbReference type="NCBI Taxonomy" id="557436"/>
    <lineage>
        <taxon>Bacteria</taxon>
        <taxon>Bacillati</taxon>
        <taxon>Bacillota</taxon>
        <taxon>Bacilli</taxon>
        <taxon>Lactobacillales</taxon>
        <taxon>Lactobacillaceae</taxon>
        <taxon>Limosilactobacillus</taxon>
    </lineage>
</organism>
<feature type="chain" id="PRO_1000058244" description="Peptide deformylase">
    <location>
        <begin position="1"/>
        <end position="186"/>
    </location>
</feature>
<feature type="active site" evidence="1">
    <location>
        <position position="157"/>
    </location>
</feature>
<feature type="binding site" evidence="1">
    <location>
        <position position="113"/>
    </location>
    <ligand>
        <name>Fe cation</name>
        <dbReference type="ChEBI" id="CHEBI:24875"/>
    </ligand>
</feature>
<feature type="binding site" evidence="1">
    <location>
        <position position="156"/>
    </location>
    <ligand>
        <name>Fe cation</name>
        <dbReference type="ChEBI" id="CHEBI:24875"/>
    </ligand>
</feature>
<feature type="binding site" evidence="1">
    <location>
        <position position="160"/>
    </location>
    <ligand>
        <name>Fe cation</name>
        <dbReference type="ChEBI" id="CHEBI:24875"/>
    </ligand>
</feature>
<protein>
    <recommendedName>
        <fullName evidence="1">Peptide deformylase</fullName>
        <shortName evidence="1">PDF</shortName>
        <ecNumber evidence="1">3.5.1.88</ecNumber>
    </recommendedName>
    <alternativeName>
        <fullName evidence="1">Polypeptide deformylase</fullName>
    </alternativeName>
</protein>
<comment type="function">
    <text evidence="1">Removes the formyl group from the N-terminal Met of newly synthesized proteins. Requires at least a dipeptide for an efficient rate of reaction. N-terminal L-methionine is a prerequisite for activity but the enzyme has broad specificity at other positions.</text>
</comment>
<comment type="catalytic activity">
    <reaction evidence="1">
        <text>N-terminal N-formyl-L-methionyl-[peptide] + H2O = N-terminal L-methionyl-[peptide] + formate</text>
        <dbReference type="Rhea" id="RHEA:24420"/>
        <dbReference type="Rhea" id="RHEA-COMP:10639"/>
        <dbReference type="Rhea" id="RHEA-COMP:10640"/>
        <dbReference type="ChEBI" id="CHEBI:15377"/>
        <dbReference type="ChEBI" id="CHEBI:15740"/>
        <dbReference type="ChEBI" id="CHEBI:49298"/>
        <dbReference type="ChEBI" id="CHEBI:64731"/>
        <dbReference type="EC" id="3.5.1.88"/>
    </reaction>
</comment>
<comment type="cofactor">
    <cofactor evidence="1">
        <name>Fe(2+)</name>
        <dbReference type="ChEBI" id="CHEBI:29033"/>
    </cofactor>
    <text evidence="1">Binds 1 Fe(2+) ion.</text>
</comment>
<comment type="similarity">
    <text evidence="1">Belongs to the polypeptide deformylase family.</text>
</comment>
<sequence>MYLMKDITRDGNPVLRKRAAKVSFPLSDEDQKLAKDMMKYLEVSQDPELCKKYKLRAGVGLAAPQVGVSKQMAAVLVPAPDEDEKPLFKDVIINPVIVSESVQYGALTEGEGCLSVDKDVPGYVPRHDRITLRYQDVNGETHKVRLKHYPAIVCQHEIDHLHGVLFYDHINKDQPFEAPADTVMIS</sequence>
<accession>A5VJ71</accession>
<name>DEF_LIMRD</name>
<dbReference type="EC" id="3.5.1.88" evidence="1"/>
<dbReference type="EMBL" id="CP000705">
    <property type="protein sequence ID" value="ABQ82895.1"/>
    <property type="molecule type" value="Genomic_DNA"/>
</dbReference>
<dbReference type="RefSeq" id="WP_003668269.1">
    <property type="nucleotide sequence ID" value="NC_009513.1"/>
</dbReference>
<dbReference type="SMR" id="A5VJ71"/>
<dbReference type="STRING" id="557436.Lreu_0630"/>
<dbReference type="KEGG" id="lre:Lreu_0630"/>
<dbReference type="PATRIC" id="fig|557436.17.peg.702"/>
<dbReference type="eggNOG" id="COG0242">
    <property type="taxonomic scope" value="Bacteria"/>
</dbReference>
<dbReference type="HOGENOM" id="CLU_061901_4_0_9"/>
<dbReference type="Proteomes" id="UP000001991">
    <property type="component" value="Chromosome"/>
</dbReference>
<dbReference type="GO" id="GO:0046872">
    <property type="term" value="F:metal ion binding"/>
    <property type="evidence" value="ECO:0007669"/>
    <property type="project" value="UniProtKB-KW"/>
</dbReference>
<dbReference type="GO" id="GO:0042586">
    <property type="term" value="F:peptide deformylase activity"/>
    <property type="evidence" value="ECO:0007669"/>
    <property type="project" value="UniProtKB-UniRule"/>
</dbReference>
<dbReference type="GO" id="GO:0043686">
    <property type="term" value="P:co-translational protein modification"/>
    <property type="evidence" value="ECO:0007669"/>
    <property type="project" value="TreeGrafter"/>
</dbReference>
<dbReference type="GO" id="GO:0006412">
    <property type="term" value="P:translation"/>
    <property type="evidence" value="ECO:0007669"/>
    <property type="project" value="UniProtKB-UniRule"/>
</dbReference>
<dbReference type="CDD" id="cd00487">
    <property type="entry name" value="Pep_deformylase"/>
    <property type="match status" value="1"/>
</dbReference>
<dbReference type="FunFam" id="3.90.45.10:FF:000002">
    <property type="entry name" value="Peptide deformylase"/>
    <property type="match status" value="1"/>
</dbReference>
<dbReference type="Gene3D" id="3.90.45.10">
    <property type="entry name" value="Peptide deformylase"/>
    <property type="match status" value="1"/>
</dbReference>
<dbReference type="HAMAP" id="MF_00163">
    <property type="entry name" value="Pep_deformylase"/>
    <property type="match status" value="1"/>
</dbReference>
<dbReference type="InterPro" id="IPR023635">
    <property type="entry name" value="Peptide_deformylase"/>
</dbReference>
<dbReference type="InterPro" id="IPR036821">
    <property type="entry name" value="Peptide_deformylase_sf"/>
</dbReference>
<dbReference type="NCBIfam" id="TIGR00079">
    <property type="entry name" value="pept_deformyl"/>
    <property type="match status" value="1"/>
</dbReference>
<dbReference type="PANTHER" id="PTHR10458">
    <property type="entry name" value="PEPTIDE DEFORMYLASE"/>
    <property type="match status" value="1"/>
</dbReference>
<dbReference type="PANTHER" id="PTHR10458:SF8">
    <property type="entry name" value="PEPTIDE DEFORMYLASE 2"/>
    <property type="match status" value="1"/>
</dbReference>
<dbReference type="Pfam" id="PF01327">
    <property type="entry name" value="Pep_deformylase"/>
    <property type="match status" value="1"/>
</dbReference>
<dbReference type="PIRSF" id="PIRSF004749">
    <property type="entry name" value="Pep_def"/>
    <property type="match status" value="1"/>
</dbReference>
<dbReference type="PRINTS" id="PR01576">
    <property type="entry name" value="PDEFORMYLASE"/>
</dbReference>
<dbReference type="SUPFAM" id="SSF56420">
    <property type="entry name" value="Peptide deformylase"/>
    <property type="match status" value="1"/>
</dbReference>
<keyword id="KW-0378">Hydrolase</keyword>
<keyword id="KW-0408">Iron</keyword>
<keyword id="KW-0479">Metal-binding</keyword>
<keyword id="KW-0648">Protein biosynthesis</keyword>
<keyword id="KW-1185">Reference proteome</keyword>
<reference key="1">
    <citation type="journal article" date="2011" name="PLoS Genet.">
        <title>The evolution of host specialization in the vertebrate gut symbiont Lactobacillus reuteri.</title>
        <authorList>
            <person name="Frese S.A."/>
            <person name="Benson A.K."/>
            <person name="Tannock G.W."/>
            <person name="Loach D.M."/>
            <person name="Kim J."/>
            <person name="Zhang M."/>
            <person name="Oh P.L."/>
            <person name="Heng N.C."/>
            <person name="Patil P.B."/>
            <person name="Juge N."/>
            <person name="Mackenzie D.A."/>
            <person name="Pearson B.M."/>
            <person name="Lapidus A."/>
            <person name="Dalin E."/>
            <person name="Tice H."/>
            <person name="Goltsman E."/>
            <person name="Land M."/>
            <person name="Hauser L."/>
            <person name="Ivanova N."/>
            <person name="Kyrpides N.C."/>
            <person name="Walter J."/>
        </authorList>
    </citation>
    <scope>NUCLEOTIDE SEQUENCE [LARGE SCALE GENOMIC DNA]</scope>
    <source>
        <strain>DSM 20016</strain>
    </source>
</reference>
<proteinExistence type="inferred from homology"/>